<protein>
    <recommendedName>
        <fullName evidence="1">Large ribosomal subunit protein bL27</fullName>
    </recommendedName>
    <alternativeName>
        <fullName evidence="3">50S ribosomal protein L27</fullName>
    </alternativeName>
</protein>
<proteinExistence type="inferred from homology"/>
<feature type="chain" id="PRO_1000128831" description="Large ribosomal subunit protein bL27">
    <location>
        <begin position="1"/>
        <end position="85"/>
    </location>
</feature>
<feature type="region of interest" description="Disordered" evidence="2">
    <location>
        <begin position="1"/>
        <end position="20"/>
    </location>
</feature>
<sequence>MAHKKAGGSTRNGRDSESKRLGVKRFGGEAVLAGSIIVRQRGTKFHAGINVGCGKDHTLFALADGKVKFEVKGPKNRKFISIEAE</sequence>
<organism>
    <name type="scientific">Yersinia pseudotuberculosis serotype IB (strain PB1/+)</name>
    <dbReference type="NCBI Taxonomy" id="502801"/>
    <lineage>
        <taxon>Bacteria</taxon>
        <taxon>Pseudomonadati</taxon>
        <taxon>Pseudomonadota</taxon>
        <taxon>Gammaproteobacteria</taxon>
        <taxon>Enterobacterales</taxon>
        <taxon>Yersiniaceae</taxon>
        <taxon>Yersinia</taxon>
    </lineage>
</organism>
<keyword id="KW-0687">Ribonucleoprotein</keyword>
<keyword id="KW-0689">Ribosomal protein</keyword>
<accession>B2K2P0</accession>
<reference key="1">
    <citation type="submission" date="2008-04" db="EMBL/GenBank/DDBJ databases">
        <title>Complete sequence of Yersinia pseudotuberculosis PB1/+.</title>
        <authorList>
            <person name="Copeland A."/>
            <person name="Lucas S."/>
            <person name="Lapidus A."/>
            <person name="Glavina del Rio T."/>
            <person name="Dalin E."/>
            <person name="Tice H."/>
            <person name="Bruce D."/>
            <person name="Goodwin L."/>
            <person name="Pitluck S."/>
            <person name="Munk A.C."/>
            <person name="Brettin T."/>
            <person name="Detter J.C."/>
            <person name="Han C."/>
            <person name="Tapia R."/>
            <person name="Schmutz J."/>
            <person name="Larimer F."/>
            <person name="Land M."/>
            <person name="Hauser L."/>
            <person name="Challacombe J.F."/>
            <person name="Green L."/>
            <person name="Lindler L.E."/>
            <person name="Nikolich M.P."/>
            <person name="Richardson P."/>
        </authorList>
    </citation>
    <scope>NUCLEOTIDE SEQUENCE [LARGE SCALE GENOMIC DNA]</scope>
    <source>
        <strain>PB1/+</strain>
    </source>
</reference>
<comment type="similarity">
    <text evidence="1">Belongs to the bacterial ribosomal protein bL27 family.</text>
</comment>
<dbReference type="EMBL" id="CP001048">
    <property type="protein sequence ID" value="ACC87481.1"/>
    <property type="molecule type" value="Genomic_DNA"/>
</dbReference>
<dbReference type="RefSeq" id="WP_002210179.1">
    <property type="nucleotide sequence ID" value="NZ_CP009780.1"/>
</dbReference>
<dbReference type="SMR" id="B2K2P0"/>
<dbReference type="GeneID" id="97457883"/>
<dbReference type="KEGG" id="ypb:YPTS_0495"/>
<dbReference type="PATRIC" id="fig|502801.10.peg.4169"/>
<dbReference type="GO" id="GO:0022625">
    <property type="term" value="C:cytosolic large ribosomal subunit"/>
    <property type="evidence" value="ECO:0007669"/>
    <property type="project" value="TreeGrafter"/>
</dbReference>
<dbReference type="GO" id="GO:0003735">
    <property type="term" value="F:structural constituent of ribosome"/>
    <property type="evidence" value="ECO:0007669"/>
    <property type="project" value="InterPro"/>
</dbReference>
<dbReference type="GO" id="GO:0006412">
    <property type="term" value="P:translation"/>
    <property type="evidence" value="ECO:0007669"/>
    <property type="project" value="UniProtKB-UniRule"/>
</dbReference>
<dbReference type="FunFam" id="2.40.50.100:FF:000001">
    <property type="entry name" value="50S ribosomal protein L27"/>
    <property type="match status" value="1"/>
</dbReference>
<dbReference type="Gene3D" id="2.40.50.100">
    <property type="match status" value="1"/>
</dbReference>
<dbReference type="HAMAP" id="MF_00539">
    <property type="entry name" value="Ribosomal_bL27"/>
    <property type="match status" value="1"/>
</dbReference>
<dbReference type="InterPro" id="IPR001684">
    <property type="entry name" value="Ribosomal_bL27"/>
</dbReference>
<dbReference type="InterPro" id="IPR018261">
    <property type="entry name" value="Ribosomal_bL27_CS"/>
</dbReference>
<dbReference type="NCBIfam" id="TIGR00062">
    <property type="entry name" value="L27"/>
    <property type="match status" value="1"/>
</dbReference>
<dbReference type="PANTHER" id="PTHR15893:SF0">
    <property type="entry name" value="LARGE RIBOSOMAL SUBUNIT PROTEIN BL27M"/>
    <property type="match status" value="1"/>
</dbReference>
<dbReference type="PANTHER" id="PTHR15893">
    <property type="entry name" value="RIBOSOMAL PROTEIN L27"/>
    <property type="match status" value="1"/>
</dbReference>
<dbReference type="Pfam" id="PF01016">
    <property type="entry name" value="Ribosomal_L27"/>
    <property type="match status" value="1"/>
</dbReference>
<dbReference type="PRINTS" id="PR00063">
    <property type="entry name" value="RIBOSOMALL27"/>
</dbReference>
<dbReference type="SUPFAM" id="SSF110324">
    <property type="entry name" value="Ribosomal L27 protein-like"/>
    <property type="match status" value="1"/>
</dbReference>
<dbReference type="PROSITE" id="PS00831">
    <property type="entry name" value="RIBOSOMAL_L27"/>
    <property type="match status" value="1"/>
</dbReference>
<gene>
    <name evidence="1" type="primary">rpmA</name>
    <name type="ordered locus">YPTS_0495</name>
</gene>
<name>RL27_YERPB</name>
<evidence type="ECO:0000255" key="1">
    <source>
        <dbReference type="HAMAP-Rule" id="MF_00539"/>
    </source>
</evidence>
<evidence type="ECO:0000256" key="2">
    <source>
        <dbReference type="SAM" id="MobiDB-lite"/>
    </source>
</evidence>
<evidence type="ECO:0000305" key="3"/>